<evidence type="ECO:0000250" key="1"/>
<evidence type="ECO:0000305" key="2"/>
<evidence type="ECO:0000305" key="3">
    <source>
    </source>
</evidence>
<sequence length="134" mass="14427">MSWQAYVDDHLMCDIEGHEGHRLTAAAIVGHDGSVWAQSATFPQFKPEEMNGIMTDFNEPGHLAPTGLHLGGTKYMVIQGEAGAVIRGKKGSGGITIKKTGQALVFGIYEEPVTPGQCNMVVERLGDYLLEQGL</sequence>
<dbReference type="EMBL" id="DQ317565">
    <property type="protein sequence ID" value="ABC47408.1"/>
    <property type="molecule type" value="mRNA"/>
</dbReference>
<dbReference type="SMR" id="P0DKD8"/>
<dbReference type="GO" id="GO:0005938">
    <property type="term" value="C:cell cortex"/>
    <property type="evidence" value="ECO:0007669"/>
    <property type="project" value="TreeGrafter"/>
</dbReference>
<dbReference type="GO" id="GO:0005856">
    <property type="term" value="C:cytoskeleton"/>
    <property type="evidence" value="ECO:0007669"/>
    <property type="project" value="UniProtKB-SubCell"/>
</dbReference>
<dbReference type="GO" id="GO:0003785">
    <property type="term" value="F:actin monomer binding"/>
    <property type="evidence" value="ECO:0007669"/>
    <property type="project" value="TreeGrafter"/>
</dbReference>
<dbReference type="CDD" id="cd00148">
    <property type="entry name" value="PROF"/>
    <property type="match status" value="1"/>
</dbReference>
<dbReference type="FunFam" id="3.30.450.30:FF:000001">
    <property type="entry name" value="Profilin"/>
    <property type="match status" value="1"/>
</dbReference>
<dbReference type="Gene3D" id="3.30.450.30">
    <property type="entry name" value="Dynein light chain 2a, cytoplasmic"/>
    <property type="match status" value="1"/>
</dbReference>
<dbReference type="InterPro" id="IPR048278">
    <property type="entry name" value="PFN"/>
</dbReference>
<dbReference type="InterPro" id="IPR005455">
    <property type="entry name" value="PFN_euk"/>
</dbReference>
<dbReference type="InterPro" id="IPR036140">
    <property type="entry name" value="PFN_sf"/>
</dbReference>
<dbReference type="InterPro" id="IPR027310">
    <property type="entry name" value="Profilin_CS"/>
</dbReference>
<dbReference type="PANTHER" id="PTHR11604">
    <property type="entry name" value="PROFILIN"/>
    <property type="match status" value="1"/>
</dbReference>
<dbReference type="PANTHER" id="PTHR11604:SF25">
    <property type="entry name" value="PROFILIN-5"/>
    <property type="match status" value="1"/>
</dbReference>
<dbReference type="Pfam" id="PF00235">
    <property type="entry name" value="Profilin"/>
    <property type="match status" value="1"/>
</dbReference>
<dbReference type="PRINTS" id="PR00392">
    <property type="entry name" value="PROFILIN"/>
</dbReference>
<dbReference type="PRINTS" id="PR01640">
    <property type="entry name" value="PROFILINPLNT"/>
</dbReference>
<dbReference type="SMART" id="SM00392">
    <property type="entry name" value="PROF"/>
    <property type="match status" value="1"/>
</dbReference>
<dbReference type="SUPFAM" id="SSF55770">
    <property type="entry name" value="Profilin (actin-binding protein)"/>
    <property type="match status" value="1"/>
</dbReference>
<dbReference type="PROSITE" id="PS00414">
    <property type="entry name" value="PROFILIN"/>
    <property type="match status" value="1"/>
</dbReference>
<comment type="function">
    <text evidence="1">Binds to actin and affects the structure of the cytoskeleton. At high concentrations, profilin prevents the polymerization of actin, whereas it enhances it at low concentrations (By similarity).</text>
</comment>
<comment type="subunit">
    <text evidence="1">Occurs in many kinds of cells as a complex with monomeric actin in a 1:1 ratio.</text>
</comment>
<comment type="subcellular location">
    <subcellularLocation>
        <location evidence="1">Cytoplasm</location>
        <location evidence="1">Cytoskeleton</location>
    </subcellularLocation>
</comment>
<comment type="PTM">
    <text evidence="1">Phosphorylated by MAP kinases.</text>
</comment>
<comment type="polymorphism">
    <text>Several isoforms of the allergen exist due to polymorphism.</text>
</comment>
<comment type="allergen">
    <text>Causes an allergic reaction in human.</text>
</comment>
<comment type="miscellaneous">
    <text evidence="3">The variability of the residues taking part of IgE-binding epitopes might be responsible of the difference in cross-reactivity among olive pollen cultivars, and between distantly related pollen species, leading to a variable range of allergy reactions among atopic patients.</text>
</comment>
<comment type="similarity">
    <text evidence="2">Belongs to the profilin family.</text>
</comment>
<feature type="initiator methionine" description="Removed" evidence="1">
    <location>
        <position position="1"/>
    </location>
</feature>
<feature type="chain" id="PRO_0000424979" description="Profilin-1">
    <location>
        <begin position="2"/>
        <end position="134"/>
    </location>
</feature>
<feature type="short sequence motif" description="Involved in PIP2 interaction">
    <location>
        <begin position="84"/>
        <end position="100"/>
    </location>
</feature>
<feature type="modified residue" description="Phosphothreonine" evidence="1">
    <location>
        <position position="114"/>
    </location>
</feature>
<feature type="disulfide bond" evidence="3">
    <location>
        <begin position="13"/>
        <end position="118"/>
    </location>
</feature>
<proteinExistence type="evidence at protein level"/>
<protein>
    <recommendedName>
        <fullName>Profilin-1</fullName>
    </recommendedName>
    <alternativeName>
        <fullName>Pollen allergen Ole e 2</fullName>
    </alternativeName>
    <allergenName>Ole e 2</allergenName>
</protein>
<reference key="1">
    <citation type="journal article" date="2012" name="PLoS ONE">
        <title>Characterization of profilin polymorphism in pollen with a focus on multifunctionality.</title>
        <authorList>
            <person name="Jimenez-Lopez J.C."/>
            <person name="Morales S."/>
            <person name="Castro A.J."/>
            <person name="Volkmann D."/>
            <person name="Rodriguez-Garcia M.I."/>
            <person name="Alche Jde D."/>
        </authorList>
    </citation>
    <scope>NUCLEOTIDE SEQUENCE [MRNA]</scope>
    <scope>POLYMORPHISM</scope>
    <source>
        <strain>cv. Farga</strain>
        <tissue>Pollen</tissue>
    </source>
</reference>
<reference key="2">
    <citation type="journal article" date="2013" name="PLoS ONE">
        <title>Analysis of the effects of polymorphism on pollen profilin structural functionality and the generation of conformational, T- and B-cell epitopes.</title>
        <authorList>
            <person name="Jimenez-Lopez J.C."/>
            <person name="Rodriguez-Garcia M.I."/>
            <person name="Alche J.D."/>
        </authorList>
    </citation>
    <scope>3D-STRUCTURE MODELING</scope>
    <scope>DISULFIDE BOND</scope>
</reference>
<accession>P0DKD8</accession>
<accession>A4GCR3</accession>
<organism>
    <name type="scientific">Olea europaea</name>
    <name type="common">Common olive</name>
    <dbReference type="NCBI Taxonomy" id="4146"/>
    <lineage>
        <taxon>Eukaryota</taxon>
        <taxon>Viridiplantae</taxon>
        <taxon>Streptophyta</taxon>
        <taxon>Embryophyta</taxon>
        <taxon>Tracheophyta</taxon>
        <taxon>Spermatophyta</taxon>
        <taxon>Magnoliopsida</taxon>
        <taxon>eudicotyledons</taxon>
        <taxon>Gunneridae</taxon>
        <taxon>Pentapetalae</taxon>
        <taxon>asterids</taxon>
        <taxon>lamiids</taxon>
        <taxon>Lamiales</taxon>
        <taxon>Oleaceae</taxon>
        <taxon>Oleeae</taxon>
        <taxon>Olea</taxon>
    </lineage>
</organism>
<name>PROFN_OLEEU</name>
<keyword id="KW-0009">Actin-binding</keyword>
<keyword id="KW-0020">Allergen</keyword>
<keyword id="KW-0963">Cytoplasm</keyword>
<keyword id="KW-0206">Cytoskeleton</keyword>
<keyword id="KW-1015">Disulfide bond</keyword>
<keyword id="KW-0597">Phosphoprotein</keyword>